<protein>
    <recommendedName>
        <fullName evidence="1">Putative tRNA (cytidine(34)-2'-O)-methyltransferase</fullName>
        <ecNumber evidence="1">2.1.1.207</ecNumber>
    </recommendedName>
    <alternativeName>
        <fullName evidence="1">tRNA (cytidine/uridine-2'-O-)-methyltransferase</fullName>
    </alternativeName>
</protein>
<dbReference type="EC" id="2.1.1.207" evidence="1"/>
<dbReference type="EMBL" id="L43967">
    <property type="protein sequence ID" value="AAC71571.1"/>
    <property type="molecule type" value="Genomic_DNA"/>
</dbReference>
<dbReference type="PIR" id="C64238">
    <property type="entry name" value="C64238"/>
</dbReference>
<dbReference type="RefSeq" id="WP_009885804.1">
    <property type="nucleotide sequence ID" value="NC_000908.2"/>
</dbReference>
<dbReference type="SMR" id="P47588"/>
<dbReference type="FunCoup" id="P47588">
    <property type="interactions" value="76"/>
</dbReference>
<dbReference type="STRING" id="243273.MG_346"/>
<dbReference type="GeneID" id="88282523"/>
<dbReference type="KEGG" id="mge:MG_346"/>
<dbReference type="eggNOG" id="COG0219">
    <property type="taxonomic scope" value="Bacteria"/>
</dbReference>
<dbReference type="HOGENOM" id="CLU_110125_0_0_14"/>
<dbReference type="InParanoid" id="P47588"/>
<dbReference type="OrthoDB" id="9789043at2"/>
<dbReference type="BioCyc" id="MGEN243273:G1GJ2-433-MONOMER"/>
<dbReference type="Proteomes" id="UP000000807">
    <property type="component" value="Chromosome"/>
</dbReference>
<dbReference type="GO" id="GO:0005737">
    <property type="term" value="C:cytoplasm"/>
    <property type="evidence" value="ECO:0007669"/>
    <property type="project" value="UniProtKB-SubCell"/>
</dbReference>
<dbReference type="GO" id="GO:0003723">
    <property type="term" value="F:RNA binding"/>
    <property type="evidence" value="ECO:0007669"/>
    <property type="project" value="InterPro"/>
</dbReference>
<dbReference type="GO" id="GO:0141102">
    <property type="term" value="F:tRNA (5-carboxymethylaminomethyluridine(34)-2'-O)-methyltransferase activity"/>
    <property type="evidence" value="ECO:0007669"/>
    <property type="project" value="RHEA"/>
</dbReference>
<dbReference type="GO" id="GO:0141098">
    <property type="term" value="F:tRNA (cytidine(34)-2'-O)-methyltransferase activity"/>
    <property type="evidence" value="ECO:0007669"/>
    <property type="project" value="RHEA"/>
</dbReference>
<dbReference type="GO" id="GO:0002130">
    <property type="term" value="P:wobble position ribose methylation"/>
    <property type="evidence" value="ECO:0000318"/>
    <property type="project" value="GO_Central"/>
</dbReference>
<dbReference type="CDD" id="cd18094">
    <property type="entry name" value="SpoU-like_TrmL"/>
    <property type="match status" value="1"/>
</dbReference>
<dbReference type="FunFam" id="3.40.1280.10:FF:000052">
    <property type="entry name" value="Putative tRNA (cytidine(34)-2'-O)-methyltransferase"/>
    <property type="match status" value="1"/>
</dbReference>
<dbReference type="Gene3D" id="3.40.1280.10">
    <property type="match status" value="1"/>
</dbReference>
<dbReference type="HAMAP" id="MF_01885">
    <property type="entry name" value="tRNA_methyltr_TrmL"/>
    <property type="match status" value="1"/>
</dbReference>
<dbReference type="InterPro" id="IPR029028">
    <property type="entry name" value="Alpha/beta_knot_MTases"/>
</dbReference>
<dbReference type="InterPro" id="IPR001537">
    <property type="entry name" value="SpoU_MeTrfase"/>
</dbReference>
<dbReference type="InterPro" id="IPR016914">
    <property type="entry name" value="TrmL"/>
</dbReference>
<dbReference type="InterPro" id="IPR029026">
    <property type="entry name" value="tRNA_m1G_MTases_N"/>
</dbReference>
<dbReference type="NCBIfam" id="TIGR00185">
    <property type="entry name" value="tRNA_yibK_trmL"/>
    <property type="match status" value="1"/>
</dbReference>
<dbReference type="PANTHER" id="PTHR42971">
    <property type="entry name" value="TRNA (CYTIDINE(34)-2'-O)-METHYLTRANSFERASE"/>
    <property type="match status" value="1"/>
</dbReference>
<dbReference type="PANTHER" id="PTHR42971:SF1">
    <property type="entry name" value="TRNA (CYTIDINE(34)-2'-O)-METHYLTRANSFERASE"/>
    <property type="match status" value="1"/>
</dbReference>
<dbReference type="Pfam" id="PF00588">
    <property type="entry name" value="SpoU_methylase"/>
    <property type="match status" value="1"/>
</dbReference>
<dbReference type="PIRSF" id="PIRSF029256">
    <property type="entry name" value="SpoU_TrmH_prd"/>
    <property type="match status" value="1"/>
</dbReference>
<dbReference type="SUPFAM" id="SSF75217">
    <property type="entry name" value="alpha/beta knot"/>
    <property type="match status" value="1"/>
</dbReference>
<organism>
    <name type="scientific">Mycoplasma genitalium (strain ATCC 33530 / DSM 19775 / NCTC 10195 / G37)</name>
    <name type="common">Mycoplasmoides genitalium</name>
    <dbReference type="NCBI Taxonomy" id="243273"/>
    <lineage>
        <taxon>Bacteria</taxon>
        <taxon>Bacillati</taxon>
        <taxon>Mycoplasmatota</taxon>
        <taxon>Mycoplasmoidales</taxon>
        <taxon>Mycoplasmoidaceae</taxon>
        <taxon>Mycoplasmoides</taxon>
    </lineage>
</organism>
<name>TRML_MYCGE</name>
<reference key="1">
    <citation type="journal article" date="1995" name="Science">
        <title>The minimal gene complement of Mycoplasma genitalium.</title>
        <authorList>
            <person name="Fraser C.M."/>
            <person name="Gocayne J.D."/>
            <person name="White O."/>
            <person name="Adams M.D."/>
            <person name="Clayton R.A."/>
            <person name="Fleischmann R.D."/>
            <person name="Bult C.J."/>
            <person name="Kerlavage A.R."/>
            <person name="Sutton G.G."/>
            <person name="Kelley J.M."/>
            <person name="Fritchman J.L."/>
            <person name="Weidman J.F."/>
            <person name="Small K.V."/>
            <person name="Sandusky M."/>
            <person name="Fuhrmann J.L."/>
            <person name="Nguyen D.T."/>
            <person name="Utterback T.R."/>
            <person name="Saudek D.M."/>
            <person name="Phillips C.A."/>
            <person name="Merrick J.M."/>
            <person name="Tomb J.-F."/>
            <person name="Dougherty B.A."/>
            <person name="Bott K.F."/>
            <person name="Hu P.-C."/>
            <person name="Lucier T.S."/>
            <person name="Peterson S.N."/>
            <person name="Smith H.O."/>
            <person name="Hutchison C.A. III"/>
            <person name="Venter J.C."/>
        </authorList>
    </citation>
    <scope>NUCLEOTIDE SEQUENCE [LARGE SCALE GENOMIC DNA]</scope>
    <source>
        <strain>ATCC 33530 / DSM 19775 / NCTC 10195 / G37</strain>
    </source>
</reference>
<accession>P47588</accession>
<comment type="function">
    <text evidence="1">Could methylate the ribose at the nucleotide 34 wobble position in tRNA.</text>
</comment>
<comment type="catalytic activity">
    <reaction evidence="1">
        <text>cytidine(34) in tRNA + S-adenosyl-L-methionine = 2'-O-methylcytidine(34) in tRNA + S-adenosyl-L-homocysteine + H(+)</text>
        <dbReference type="Rhea" id="RHEA:43084"/>
        <dbReference type="Rhea" id="RHEA-COMP:10331"/>
        <dbReference type="Rhea" id="RHEA-COMP:10332"/>
        <dbReference type="ChEBI" id="CHEBI:15378"/>
        <dbReference type="ChEBI" id="CHEBI:57856"/>
        <dbReference type="ChEBI" id="CHEBI:59789"/>
        <dbReference type="ChEBI" id="CHEBI:74495"/>
        <dbReference type="ChEBI" id="CHEBI:82748"/>
        <dbReference type="EC" id="2.1.1.207"/>
    </reaction>
</comment>
<comment type="catalytic activity">
    <reaction evidence="1">
        <text>5-carboxymethylaminomethyluridine(34) in tRNA(Leu) + S-adenosyl-L-methionine = 5-carboxymethylaminomethyl-2'-O-methyluridine(34) in tRNA(Leu) + S-adenosyl-L-homocysteine + H(+)</text>
        <dbReference type="Rhea" id="RHEA:43088"/>
        <dbReference type="Rhea" id="RHEA-COMP:10333"/>
        <dbReference type="Rhea" id="RHEA-COMP:10334"/>
        <dbReference type="ChEBI" id="CHEBI:15378"/>
        <dbReference type="ChEBI" id="CHEBI:57856"/>
        <dbReference type="ChEBI" id="CHEBI:59789"/>
        <dbReference type="ChEBI" id="CHEBI:74508"/>
        <dbReference type="ChEBI" id="CHEBI:74511"/>
        <dbReference type="EC" id="2.1.1.207"/>
    </reaction>
</comment>
<comment type="subcellular location">
    <subcellularLocation>
        <location evidence="1">Cytoplasm</location>
    </subcellularLocation>
</comment>
<comment type="similarity">
    <text evidence="1">Belongs to the class IV-like SAM-binding methyltransferase superfamily. RNA methyltransferase TrmH family. TrmL subfamily.</text>
</comment>
<proteinExistence type="inferred from homology"/>
<evidence type="ECO:0000255" key="1">
    <source>
        <dbReference type="HAMAP-Rule" id="MF_01885"/>
    </source>
</evidence>
<feature type="chain" id="PRO_0000159835" description="Putative tRNA (cytidine(34)-2'-O)-methyltransferase">
    <location>
        <begin position="1"/>
        <end position="166"/>
    </location>
</feature>
<feature type="binding site" evidence="1">
    <location>
        <position position="83"/>
    </location>
    <ligand>
        <name>S-adenosyl-L-methionine</name>
        <dbReference type="ChEBI" id="CHEBI:59789"/>
    </ligand>
</feature>
<feature type="binding site" evidence="1">
    <location>
        <position position="109"/>
    </location>
    <ligand>
        <name>S-adenosyl-L-methionine</name>
        <dbReference type="ChEBI" id="CHEBI:59789"/>
    </ligand>
</feature>
<feature type="binding site" evidence="1">
    <location>
        <position position="130"/>
    </location>
    <ligand>
        <name>S-adenosyl-L-methionine</name>
        <dbReference type="ChEBI" id="CHEBI:59789"/>
    </ligand>
</feature>
<feature type="binding site" evidence="1">
    <location>
        <position position="138"/>
    </location>
    <ligand>
        <name>S-adenosyl-L-methionine</name>
        <dbReference type="ChEBI" id="CHEBI:59789"/>
    </ligand>
</feature>
<keyword id="KW-0963">Cytoplasm</keyword>
<keyword id="KW-0489">Methyltransferase</keyword>
<keyword id="KW-1185">Reference proteome</keyword>
<keyword id="KW-0949">S-adenosyl-L-methionine</keyword>
<keyword id="KW-0808">Transferase</keyword>
<keyword id="KW-0819">tRNA processing</keyword>
<sequence>MYKSVINIVLFCPEIPNNTGNIVRSCTAFKANLHLIKPYGFFLNDKRMVRAGLNCWDKIQLFEHKSWEHFLQATTENKTIWLLTKSGDKTPDQICMTNKLPNELYFVFGQETKGLPKTIMDNFKQNQIRIPIWNSVRSINLANAVVCILYEYSKQNQYSNLDKQCA</sequence>
<gene>
    <name type="ordered locus">MG346</name>
</gene>